<protein>
    <recommendedName>
        <fullName evidence="1">Protein-glutamate methylesterase/protein-glutamine glutaminase 2</fullName>
        <ecNumber evidence="1">3.1.1.61</ecNumber>
        <ecNumber evidence="1">3.5.1.44</ecNumber>
    </recommendedName>
</protein>
<evidence type="ECO:0000255" key="1">
    <source>
        <dbReference type="HAMAP-Rule" id="MF_00099"/>
    </source>
</evidence>
<accession>Q1MC14</accession>
<reference key="1">
    <citation type="journal article" date="2006" name="Genome Biol.">
        <title>The genome of Rhizobium leguminosarum has recognizable core and accessory components.</title>
        <authorList>
            <person name="Young J.P.W."/>
            <person name="Crossman L.C."/>
            <person name="Johnston A.W.B."/>
            <person name="Thomson N.R."/>
            <person name="Ghazoui Z.F."/>
            <person name="Hull K.H."/>
            <person name="Wexler M."/>
            <person name="Curson A.R.J."/>
            <person name="Todd J.D."/>
            <person name="Poole P.S."/>
            <person name="Mauchline T.H."/>
            <person name="East A.K."/>
            <person name="Quail M.A."/>
            <person name="Churcher C."/>
            <person name="Arrowsmith C."/>
            <person name="Cherevach I."/>
            <person name="Chillingworth T."/>
            <person name="Clarke K."/>
            <person name="Cronin A."/>
            <person name="Davis P."/>
            <person name="Fraser A."/>
            <person name="Hance Z."/>
            <person name="Hauser H."/>
            <person name="Jagels K."/>
            <person name="Moule S."/>
            <person name="Mungall K."/>
            <person name="Norbertczak H."/>
            <person name="Rabbinowitsch E."/>
            <person name="Sanders M."/>
            <person name="Simmonds M."/>
            <person name="Whitehead S."/>
            <person name="Parkhill J."/>
        </authorList>
    </citation>
    <scope>NUCLEOTIDE SEQUENCE [LARGE SCALE GENOMIC DNA]</scope>
    <source>
        <strain>DSM 114642 / LMG 32736 / 3841</strain>
    </source>
</reference>
<sequence length="365" mass="39206">MAKKIRVLIIDDSASIRQTLTHVLEQDPDIEIMAVASDPFMAARKLQEEIPDVITLDVEMPRMDGITFLRKLMSQRPIPVVMCSSLTEAGSETLLQALEAGAVDVILKSKIGAADSLSDDAMRIREVVKSASHARLSNVRRAAGTIRSASVEGPAKKLTADVMLPPPTGRAMAKTTEMVVCVGASTGGTEALREFLEELPANAPGMVIVQHMPEKFTAAFAKRLNGLCEVEVKEAVDGDPVLRGHVLIAPGDKHMLLERQGARYYVSVKTGPLVSRHRPSVDVLFRSAARSAGSNAMGIIMTGMGDDGARGMLEMHQAGAYTVAQDEASSVVFGMPKEAIAKGGVDRILPLDQIAREVLITQQKF</sequence>
<name>CHEB2_RHIJ3</name>
<gene>
    <name evidence="1" type="primary">cheB2</name>
    <name type="ordered locus">RL4028</name>
</gene>
<proteinExistence type="inferred from homology"/>
<organism>
    <name type="scientific">Rhizobium johnstonii (strain DSM 114642 / LMG 32736 / 3841)</name>
    <name type="common">Rhizobium leguminosarum bv. viciae</name>
    <dbReference type="NCBI Taxonomy" id="216596"/>
    <lineage>
        <taxon>Bacteria</taxon>
        <taxon>Pseudomonadati</taxon>
        <taxon>Pseudomonadota</taxon>
        <taxon>Alphaproteobacteria</taxon>
        <taxon>Hyphomicrobiales</taxon>
        <taxon>Rhizobiaceae</taxon>
        <taxon>Rhizobium/Agrobacterium group</taxon>
        <taxon>Rhizobium</taxon>
        <taxon>Rhizobium johnstonii</taxon>
    </lineage>
</organism>
<dbReference type="EC" id="3.1.1.61" evidence="1"/>
<dbReference type="EC" id="3.5.1.44" evidence="1"/>
<dbReference type="EMBL" id="AM236080">
    <property type="protein sequence ID" value="CAK09518.1"/>
    <property type="molecule type" value="Genomic_DNA"/>
</dbReference>
<dbReference type="RefSeq" id="WP_011653450.1">
    <property type="nucleotide sequence ID" value="NC_008380.1"/>
</dbReference>
<dbReference type="SMR" id="Q1MC14"/>
<dbReference type="EnsemblBacteria" id="CAK09518">
    <property type="protein sequence ID" value="CAK09518"/>
    <property type="gene ID" value="RL4028"/>
</dbReference>
<dbReference type="KEGG" id="rle:RL4028"/>
<dbReference type="eggNOG" id="COG2201">
    <property type="taxonomic scope" value="Bacteria"/>
</dbReference>
<dbReference type="HOGENOM" id="CLU_000445_51_0_5"/>
<dbReference type="Proteomes" id="UP000006575">
    <property type="component" value="Chromosome"/>
</dbReference>
<dbReference type="GO" id="GO:0005737">
    <property type="term" value="C:cytoplasm"/>
    <property type="evidence" value="ECO:0007669"/>
    <property type="project" value="UniProtKB-SubCell"/>
</dbReference>
<dbReference type="GO" id="GO:0000156">
    <property type="term" value="F:phosphorelay response regulator activity"/>
    <property type="evidence" value="ECO:0007669"/>
    <property type="project" value="InterPro"/>
</dbReference>
<dbReference type="GO" id="GO:0008984">
    <property type="term" value="F:protein-glutamate methylesterase activity"/>
    <property type="evidence" value="ECO:0007669"/>
    <property type="project" value="UniProtKB-UniRule"/>
</dbReference>
<dbReference type="GO" id="GO:0050568">
    <property type="term" value="F:protein-glutamine glutaminase activity"/>
    <property type="evidence" value="ECO:0007669"/>
    <property type="project" value="UniProtKB-UniRule"/>
</dbReference>
<dbReference type="GO" id="GO:0006935">
    <property type="term" value="P:chemotaxis"/>
    <property type="evidence" value="ECO:0007669"/>
    <property type="project" value="UniProtKB-UniRule"/>
</dbReference>
<dbReference type="CDD" id="cd16432">
    <property type="entry name" value="CheB_Rec"/>
    <property type="match status" value="1"/>
</dbReference>
<dbReference type="CDD" id="cd17541">
    <property type="entry name" value="REC_CheB-like"/>
    <property type="match status" value="1"/>
</dbReference>
<dbReference type="Gene3D" id="3.40.50.2300">
    <property type="match status" value="1"/>
</dbReference>
<dbReference type="Gene3D" id="3.40.50.180">
    <property type="entry name" value="Methylesterase CheB, C-terminal domain"/>
    <property type="match status" value="1"/>
</dbReference>
<dbReference type="HAMAP" id="MF_00099">
    <property type="entry name" value="CheB_chemtxs"/>
    <property type="match status" value="1"/>
</dbReference>
<dbReference type="InterPro" id="IPR008248">
    <property type="entry name" value="CheB-like"/>
</dbReference>
<dbReference type="InterPro" id="IPR035909">
    <property type="entry name" value="CheB_C"/>
</dbReference>
<dbReference type="InterPro" id="IPR011006">
    <property type="entry name" value="CheY-like_superfamily"/>
</dbReference>
<dbReference type="InterPro" id="IPR000673">
    <property type="entry name" value="Sig_transdc_resp-reg_Me-estase"/>
</dbReference>
<dbReference type="InterPro" id="IPR001789">
    <property type="entry name" value="Sig_transdc_resp-reg_receiver"/>
</dbReference>
<dbReference type="NCBIfam" id="NF001965">
    <property type="entry name" value="PRK00742.1"/>
    <property type="match status" value="1"/>
</dbReference>
<dbReference type="NCBIfam" id="NF009206">
    <property type="entry name" value="PRK12555.1"/>
    <property type="match status" value="1"/>
</dbReference>
<dbReference type="PANTHER" id="PTHR42872">
    <property type="entry name" value="PROTEIN-GLUTAMATE METHYLESTERASE/PROTEIN-GLUTAMINE GLUTAMINASE"/>
    <property type="match status" value="1"/>
</dbReference>
<dbReference type="PANTHER" id="PTHR42872:SF6">
    <property type="entry name" value="PROTEIN-GLUTAMATE METHYLESTERASE_PROTEIN-GLUTAMINE GLUTAMINASE"/>
    <property type="match status" value="1"/>
</dbReference>
<dbReference type="Pfam" id="PF01339">
    <property type="entry name" value="CheB_methylest"/>
    <property type="match status" value="1"/>
</dbReference>
<dbReference type="Pfam" id="PF00072">
    <property type="entry name" value="Response_reg"/>
    <property type="match status" value="1"/>
</dbReference>
<dbReference type="PIRSF" id="PIRSF000876">
    <property type="entry name" value="RR_chemtxs_CheB"/>
    <property type="match status" value="1"/>
</dbReference>
<dbReference type="SMART" id="SM00448">
    <property type="entry name" value="REC"/>
    <property type="match status" value="1"/>
</dbReference>
<dbReference type="SUPFAM" id="SSF52172">
    <property type="entry name" value="CheY-like"/>
    <property type="match status" value="1"/>
</dbReference>
<dbReference type="SUPFAM" id="SSF52738">
    <property type="entry name" value="Methylesterase CheB, C-terminal domain"/>
    <property type="match status" value="1"/>
</dbReference>
<dbReference type="PROSITE" id="PS50122">
    <property type="entry name" value="CHEB"/>
    <property type="match status" value="1"/>
</dbReference>
<dbReference type="PROSITE" id="PS50110">
    <property type="entry name" value="RESPONSE_REGULATORY"/>
    <property type="match status" value="1"/>
</dbReference>
<keyword id="KW-0145">Chemotaxis</keyword>
<keyword id="KW-0963">Cytoplasm</keyword>
<keyword id="KW-0378">Hydrolase</keyword>
<keyword id="KW-0597">Phosphoprotein</keyword>
<comment type="function">
    <text evidence="1">Involved in chemotaxis. Part of a chemotaxis signal transduction system that modulates chemotaxis in response to various stimuli. Catalyzes the demethylation of specific methylglutamate residues introduced into the chemoreceptors (methyl-accepting chemotaxis proteins or MCP) by CheR. Also mediates the irreversible deamidation of specific glutamine residues to glutamic acid.</text>
</comment>
<comment type="catalytic activity">
    <reaction evidence="1">
        <text>[protein]-L-glutamate 5-O-methyl ester + H2O = L-glutamyl-[protein] + methanol + H(+)</text>
        <dbReference type="Rhea" id="RHEA:23236"/>
        <dbReference type="Rhea" id="RHEA-COMP:10208"/>
        <dbReference type="Rhea" id="RHEA-COMP:10311"/>
        <dbReference type="ChEBI" id="CHEBI:15377"/>
        <dbReference type="ChEBI" id="CHEBI:15378"/>
        <dbReference type="ChEBI" id="CHEBI:17790"/>
        <dbReference type="ChEBI" id="CHEBI:29973"/>
        <dbReference type="ChEBI" id="CHEBI:82795"/>
        <dbReference type="EC" id="3.1.1.61"/>
    </reaction>
</comment>
<comment type="catalytic activity">
    <reaction evidence="1">
        <text>L-glutaminyl-[protein] + H2O = L-glutamyl-[protein] + NH4(+)</text>
        <dbReference type="Rhea" id="RHEA:16441"/>
        <dbReference type="Rhea" id="RHEA-COMP:10207"/>
        <dbReference type="Rhea" id="RHEA-COMP:10208"/>
        <dbReference type="ChEBI" id="CHEBI:15377"/>
        <dbReference type="ChEBI" id="CHEBI:28938"/>
        <dbReference type="ChEBI" id="CHEBI:29973"/>
        <dbReference type="ChEBI" id="CHEBI:30011"/>
        <dbReference type="EC" id="3.5.1.44"/>
    </reaction>
</comment>
<comment type="subcellular location">
    <subcellularLocation>
        <location evidence="1">Cytoplasm</location>
    </subcellularLocation>
</comment>
<comment type="domain">
    <text evidence="1">Contains a C-terminal catalytic domain, and an N-terminal region which modulates catalytic activity.</text>
</comment>
<comment type="PTM">
    <text evidence="1">Phosphorylated by CheA. Phosphorylation of the N-terminal regulatory domain activates the methylesterase activity.</text>
</comment>
<comment type="similarity">
    <text evidence="1">Belongs to the CheB family.</text>
</comment>
<feature type="chain" id="PRO_0000264303" description="Protein-glutamate methylesterase/protein-glutamine glutaminase 2">
    <location>
        <begin position="1"/>
        <end position="365"/>
    </location>
</feature>
<feature type="domain" description="Response regulatory" evidence="1">
    <location>
        <begin position="6"/>
        <end position="123"/>
    </location>
</feature>
<feature type="domain" description="CheB-type methylesterase" evidence="1">
    <location>
        <begin position="173"/>
        <end position="359"/>
    </location>
</feature>
<feature type="active site" evidence="1">
    <location>
        <position position="185"/>
    </location>
</feature>
<feature type="active site" evidence="1">
    <location>
        <position position="211"/>
    </location>
</feature>
<feature type="active site" evidence="1">
    <location>
        <position position="307"/>
    </location>
</feature>
<feature type="modified residue" description="4-aspartylphosphate" evidence="1">
    <location>
        <position position="57"/>
    </location>
</feature>